<comment type="function">
    <text evidence="2">Inhibits of the DNA ejection of T4 into the host cytoplasm. By this means, T4 excludes superinfection by the phages of the same family.</text>
</comment>
<comment type="subcellular location">
    <subcellularLocation>
        <location evidence="3">Host cell inner membrane</location>
        <topology evidence="1">Multi-pass membrane protein</topology>
    </subcellularLocation>
</comment>
<name>BIMM_BPT4</name>
<organism>
    <name type="scientific">Enterobacteria phage T4</name>
    <name type="common">Bacteriophage T4</name>
    <dbReference type="NCBI Taxonomy" id="10665"/>
    <lineage>
        <taxon>Viruses</taxon>
        <taxon>Duplodnaviria</taxon>
        <taxon>Heunggongvirae</taxon>
        <taxon>Uroviricota</taxon>
        <taxon>Caudoviricetes</taxon>
        <taxon>Straboviridae</taxon>
        <taxon>Tevenvirinae</taxon>
        <taxon>Tequatrovirus</taxon>
    </lineage>
</organism>
<gene>
    <name type="primary">imm</name>
</gene>
<keyword id="KW-1030">Host cell inner membrane</keyword>
<keyword id="KW-1032">Host cell membrane</keyword>
<keyword id="KW-1043">Host membrane</keyword>
<keyword id="KW-0945">Host-virus interaction</keyword>
<keyword id="KW-0472">Membrane</keyword>
<keyword id="KW-1185">Reference proteome</keyword>
<keyword id="KW-1260">Superinfection exclusion</keyword>
<keyword id="KW-0812">Transmembrane</keyword>
<keyword id="KW-1133">Transmembrane helix</keyword>
<accession>P08986</accession>
<dbReference type="EMBL" id="X07916">
    <property type="protein sequence ID" value="CAA30750.1"/>
    <property type="molecule type" value="Genomic_DNA"/>
</dbReference>
<dbReference type="EMBL" id="M37159">
    <property type="protein sequence ID" value="AAA21708.1"/>
    <property type="molecule type" value="Genomic_DNA"/>
</dbReference>
<dbReference type="EMBL" id="AF158101">
    <property type="protein sequence ID" value="AAD42582.1"/>
    <property type="molecule type" value="Genomic_DNA"/>
</dbReference>
<dbReference type="PIR" id="JF0072">
    <property type="entry name" value="IMBPT4"/>
</dbReference>
<dbReference type="RefSeq" id="NP_049660.1">
    <property type="nucleotide sequence ID" value="NC_000866.4"/>
</dbReference>
<dbReference type="SMR" id="P08986"/>
<dbReference type="TCDB" id="1.E.9.1.1">
    <property type="family name" value="the t4 immunity (t4 imm) family"/>
</dbReference>
<dbReference type="GeneID" id="1258553"/>
<dbReference type="KEGG" id="vg:1258553"/>
<dbReference type="OrthoDB" id="20501at10239"/>
<dbReference type="Proteomes" id="UP000009087">
    <property type="component" value="Segment"/>
</dbReference>
<dbReference type="GO" id="GO:0020002">
    <property type="term" value="C:host cell plasma membrane"/>
    <property type="evidence" value="ECO:0007669"/>
    <property type="project" value="UniProtKB-SubCell"/>
</dbReference>
<dbReference type="GO" id="GO:0016020">
    <property type="term" value="C:membrane"/>
    <property type="evidence" value="ECO:0007669"/>
    <property type="project" value="UniProtKB-KW"/>
</dbReference>
<dbReference type="GO" id="GO:0098669">
    <property type="term" value="P:superinfection exclusion"/>
    <property type="evidence" value="ECO:0007669"/>
    <property type="project" value="UniProtKB-KW"/>
</dbReference>
<dbReference type="InterPro" id="IPR016410">
    <property type="entry name" value="Phage_imm"/>
</dbReference>
<dbReference type="Pfam" id="PF14373">
    <property type="entry name" value="Imm_superinfect"/>
    <property type="match status" value="1"/>
</dbReference>
<dbReference type="PIRSF" id="PIRSF004305">
    <property type="entry name" value="Phage-assoc_immunity"/>
    <property type="match status" value="1"/>
</dbReference>
<organismHost>
    <name type="scientific">Escherichia coli</name>
    <dbReference type="NCBI Taxonomy" id="562"/>
</organismHost>
<evidence type="ECO:0000255" key="1"/>
<evidence type="ECO:0000269" key="2">
    <source>
    </source>
</evidence>
<evidence type="ECO:0000269" key="3">
    <source>
    </source>
</evidence>
<evidence type="ECO:0000305" key="4">
    <source>
    </source>
</evidence>
<reference key="1">
    <citation type="journal article" date="1989" name="J. Virol.">
        <title>The immunity (imm) gene of Escherichia coli bacteriophage T4.</title>
        <authorList>
            <person name="Lu M.J."/>
            <person name="Henning U."/>
        </authorList>
    </citation>
    <scope>NUCLEOTIDE SEQUENCE [GENOMIC DNA]</scope>
    <scope>FUNCTION</scope>
</reference>
<reference key="2">
    <citation type="journal article" date="1988" name="Eur. J. Biochem.">
        <title>Deoxycytidylate hydroxymethylase gene of bacteriophage T4. Nucleotide sequence determination and over-expression of the gene.</title>
        <authorList>
            <person name="Lamm N."/>
            <person name="Wang Y."/>
            <person name="Mathews C.K."/>
            <person name="Rueger W."/>
        </authorList>
    </citation>
    <scope>NUCLEOTIDE SEQUENCE [GENOMIC DNA]</scope>
</reference>
<reference key="3">
    <citation type="journal article" date="2003" name="Microbiol. Mol. Biol. Rev.">
        <title>Bacteriophage T4 genome.</title>
        <authorList>
            <person name="Miller E.S."/>
            <person name="Kutter E."/>
            <person name="Mosig G."/>
            <person name="Arisaka F."/>
            <person name="Kunisawa T."/>
            <person name="Ruger W."/>
        </authorList>
    </citation>
    <scope>NUCLEOTIDE SEQUENCE [LARGE SCALE GENOMIC DNA]</scope>
</reference>
<reference key="4">
    <citation type="journal article" date="1993" name="J. Virol.">
        <title>Location and unusual membrane topology of the immunity protein of the Escherichia coli phage T4.</title>
        <authorList>
            <person name="Lu M.J."/>
            <person name="Stierhof Y.D."/>
            <person name="Henning U."/>
        </authorList>
    </citation>
    <scope>SUBCELLULAR LOCATION</scope>
    <scope>TOPOLOGY</scope>
</reference>
<feature type="chain" id="PRO_0000164946" description="Immunity protein">
    <location>
        <begin position="1"/>
        <end position="83"/>
    </location>
</feature>
<feature type="transmembrane region" description="Helical" evidence="4">
    <location>
        <begin position="3"/>
        <end position="32"/>
    </location>
</feature>
<feature type="transmembrane region" description="Helical" evidence="4">
    <location>
        <begin position="37"/>
        <end position="65"/>
    </location>
</feature>
<feature type="topological domain" description="Cytoplasmic" evidence="4">
    <location>
        <begin position="66"/>
        <end position="83"/>
    </location>
</feature>
<protein>
    <recommendedName>
        <fullName>Immunity protein</fullName>
    </recommendedName>
</protein>
<sequence length="83" mass="9342">METLVAGSIFMVLVSGVLAIIIYMLPWFIALMRGSKSTVGIFFASLLFNWSIIGWFITFIWSIAGETKKSAQPNQVIIIREKE</sequence>
<proteinExistence type="evidence at protein level"/>